<gene>
    <name evidence="1" type="primary">xseB</name>
    <name type="ordered locus">Hhal_1984</name>
</gene>
<comment type="function">
    <text evidence="1">Bidirectionally degrades single-stranded DNA into large acid-insoluble oligonucleotides, which are then degraded further into small acid-soluble oligonucleotides.</text>
</comment>
<comment type="catalytic activity">
    <reaction evidence="1">
        <text>Exonucleolytic cleavage in either 5'- to 3'- or 3'- to 5'-direction to yield nucleoside 5'-phosphates.</text>
        <dbReference type="EC" id="3.1.11.6"/>
    </reaction>
</comment>
<comment type="subunit">
    <text evidence="1">Heterooligomer composed of large and small subunits.</text>
</comment>
<comment type="subcellular location">
    <subcellularLocation>
        <location evidence="1">Cytoplasm</location>
    </subcellularLocation>
</comment>
<comment type="similarity">
    <text evidence="1">Belongs to the XseB family.</text>
</comment>
<dbReference type="EC" id="3.1.11.6" evidence="1"/>
<dbReference type="EMBL" id="CP000544">
    <property type="protein sequence ID" value="ABM62748.1"/>
    <property type="molecule type" value="Genomic_DNA"/>
</dbReference>
<dbReference type="RefSeq" id="WP_011814770.1">
    <property type="nucleotide sequence ID" value="NC_008789.1"/>
</dbReference>
<dbReference type="SMR" id="A1WYI6"/>
<dbReference type="STRING" id="349124.Hhal_1984"/>
<dbReference type="KEGG" id="hha:Hhal_1984"/>
<dbReference type="eggNOG" id="COG1722">
    <property type="taxonomic scope" value="Bacteria"/>
</dbReference>
<dbReference type="HOGENOM" id="CLU_145918_3_3_6"/>
<dbReference type="OrthoDB" id="9801128at2"/>
<dbReference type="Proteomes" id="UP000000647">
    <property type="component" value="Chromosome"/>
</dbReference>
<dbReference type="GO" id="GO:0005829">
    <property type="term" value="C:cytosol"/>
    <property type="evidence" value="ECO:0007669"/>
    <property type="project" value="TreeGrafter"/>
</dbReference>
<dbReference type="GO" id="GO:0009318">
    <property type="term" value="C:exodeoxyribonuclease VII complex"/>
    <property type="evidence" value="ECO:0007669"/>
    <property type="project" value="InterPro"/>
</dbReference>
<dbReference type="GO" id="GO:0008855">
    <property type="term" value="F:exodeoxyribonuclease VII activity"/>
    <property type="evidence" value="ECO:0007669"/>
    <property type="project" value="UniProtKB-UniRule"/>
</dbReference>
<dbReference type="GO" id="GO:0006308">
    <property type="term" value="P:DNA catabolic process"/>
    <property type="evidence" value="ECO:0007669"/>
    <property type="project" value="UniProtKB-UniRule"/>
</dbReference>
<dbReference type="Gene3D" id="1.10.287.1040">
    <property type="entry name" value="Exonuclease VII, small subunit"/>
    <property type="match status" value="1"/>
</dbReference>
<dbReference type="HAMAP" id="MF_00337">
    <property type="entry name" value="Exonuc_7_S"/>
    <property type="match status" value="1"/>
</dbReference>
<dbReference type="InterPro" id="IPR003761">
    <property type="entry name" value="Exonuc_VII_S"/>
</dbReference>
<dbReference type="InterPro" id="IPR037004">
    <property type="entry name" value="Exonuc_VII_ssu_sf"/>
</dbReference>
<dbReference type="NCBIfam" id="NF002140">
    <property type="entry name" value="PRK00977.1-4"/>
    <property type="match status" value="1"/>
</dbReference>
<dbReference type="NCBIfam" id="TIGR01280">
    <property type="entry name" value="xseB"/>
    <property type="match status" value="1"/>
</dbReference>
<dbReference type="PANTHER" id="PTHR34137">
    <property type="entry name" value="EXODEOXYRIBONUCLEASE 7 SMALL SUBUNIT"/>
    <property type="match status" value="1"/>
</dbReference>
<dbReference type="PANTHER" id="PTHR34137:SF1">
    <property type="entry name" value="EXODEOXYRIBONUCLEASE 7 SMALL SUBUNIT"/>
    <property type="match status" value="1"/>
</dbReference>
<dbReference type="Pfam" id="PF02609">
    <property type="entry name" value="Exonuc_VII_S"/>
    <property type="match status" value="1"/>
</dbReference>
<dbReference type="SUPFAM" id="SSF116842">
    <property type="entry name" value="XseB-like"/>
    <property type="match status" value="1"/>
</dbReference>
<accession>A1WYI6</accession>
<reference key="1">
    <citation type="submission" date="2006-12" db="EMBL/GenBank/DDBJ databases">
        <title>Complete sequence of Halorhodospira halophila SL1.</title>
        <authorList>
            <consortium name="US DOE Joint Genome Institute"/>
            <person name="Copeland A."/>
            <person name="Lucas S."/>
            <person name="Lapidus A."/>
            <person name="Barry K."/>
            <person name="Detter J.C."/>
            <person name="Glavina del Rio T."/>
            <person name="Hammon N."/>
            <person name="Israni S."/>
            <person name="Dalin E."/>
            <person name="Tice H."/>
            <person name="Pitluck S."/>
            <person name="Saunders E."/>
            <person name="Brettin T."/>
            <person name="Bruce D."/>
            <person name="Han C."/>
            <person name="Tapia R."/>
            <person name="Schmutz J."/>
            <person name="Larimer F."/>
            <person name="Land M."/>
            <person name="Hauser L."/>
            <person name="Kyrpides N."/>
            <person name="Mikhailova N."/>
            <person name="Hoff W."/>
            <person name="Richardson P."/>
        </authorList>
    </citation>
    <scope>NUCLEOTIDE SEQUENCE [LARGE SCALE GENOMIC DNA]</scope>
    <source>
        <strain>DSM 244 / SL1</strain>
    </source>
</reference>
<feature type="chain" id="PRO_0000303712" description="Exodeoxyribonuclease 7 small subunit">
    <location>
        <begin position="1"/>
        <end position="87"/>
    </location>
</feature>
<protein>
    <recommendedName>
        <fullName evidence="1">Exodeoxyribonuclease 7 small subunit</fullName>
        <ecNumber evidence="1">3.1.11.6</ecNumber>
    </recommendedName>
    <alternativeName>
        <fullName evidence="1">Exodeoxyribonuclease VII small subunit</fullName>
        <shortName evidence="1">Exonuclease VII small subunit</shortName>
    </alternativeName>
</protein>
<sequence length="87" mass="9757">MSETDSQETAPQGDLPDFERSVAELEALIERMERGEQTLEEALRDFERGIHLTRHCQKALSAAEQKVAILLENSEDGDVGPFRPDDS</sequence>
<proteinExistence type="inferred from homology"/>
<organism>
    <name type="scientific">Halorhodospira halophila (strain DSM 244 / SL1)</name>
    <name type="common">Ectothiorhodospira halophila (strain DSM 244 / SL1)</name>
    <dbReference type="NCBI Taxonomy" id="349124"/>
    <lineage>
        <taxon>Bacteria</taxon>
        <taxon>Pseudomonadati</taxon>
        <taxon>Pseudomonadota</taxon>
        <taxon>Gammaproteobacteria</taxon>
        <taxon>Chromatiales</taxon>
        <taxon>Ectothiorhodospiraceae</taxon>
        <taxon>Halorhodospira</taxon>
    </lineage>
</organism>
<evidence type="ECO:0000255" key="1">
    <source>
        <dbReference type="HAMAP-Rule" id="MF_00337"/>
    </source>
</evidence>
<keyword id="KW-0963">Cytoplasm</keyword>
<keyword id="KW-0269">Exonuclease</keyword>
<keyword id="KW-0378">Hydrolase</keyword>
<keyword id="KW-0540">Nuclease</keyword>
<keyword id="KW-1185">Reference proteome</keyword>
<name>EX7S_HALHL</name>